<name>IF2_PROMA</name>
<accession>Q7VA20</accession>
<reference key="1">
    <citation type="journal article" date="2003" name="Proc. Natl. Acad. Sci. U.S.A.">
        <title>Genome sequence of the cyanobacterium Prochlorococcus marinus SS120, a nearly minimal oxyphototrophic genome.</title>
        <authorList>
            <person name="Dufresne A."/>
            <person name="Salanoubat M."/>
            <person name="Partensky F."/>
            <person name="Artiguenave F."/>
            <person name="Axmann I.M."/>
            <person name="Barbe V."/>
            <person name="Duprat S."/>
            <person name="Galperin M.Y."/>
            <person name="Koonin E.V."/>
            <person name="Le Gall F."/>
            <person name="Makarova K.S."/>
            <person name="Ostrowski M."/>
            <person name="Oztas S."/>
            <person name="Robert C."/>
            <person name="Rogozin I.B."/>
            <person name="Scanlan D.J."/>
            <person name="Tandeau de Marsac N."/>
            <person name="Weissenbach J."/>
            <person name="Wincker P."/>
            <person name="Wolf Y.I."/>
            <person name="Hess W.R."/>
        </authorList>
    </citation>
    <scope>NUCLEOTIDE SEQUENCE [LARGE SCALE GENOMIC DNA]</scope>
    <source>
        <strain>SARG / CCMP1375 / SS120</strain>
    </source>
</reference>
<organism>
    <name type="scientific">Prochlorococcus marinus (strain SARG / CCMP1375 / SS120)</name>
    <dbReference type="NCBI Taxonomy" id="167539"/>
    <lineage>
        <taxon>Bacteria</taxon>
        <taxon>Bacillati</taxon>
        <taxon>Cyanobacteriota</taxon>
        <taxon>Cyanophyceae</taxon>
        <taxon>Synechococcales</taxon>
        <taxon>Prochlorococcaceae</taxon>
        <taxon>Prochlorococcus</taxon>
    </lineage>
</organism>
<sequence>MTSSGKIRIYELSRDLHLENKDVLDAANKLSISAKSHSSSISDEDATKIKKLLLAQKSSNSSSPPAKQKPNKEILTLKKAITSPPTKSEANAKTNASLDKTSSLKNKPASPKKEIPTSPKPPSAAKQRVDAIKKPTPSISKNNSLKVQPTIKKPSLVSPKQPNIPSPPIAPNKGIKPTIKRQDSNNENLETNKTKAKPNIVSKPQARQIKQSSDLINRSPKTSPKQPIQEIQTNKPKAPQRPIAPPPRPKVQSQFNQKPGNNNLRGGPNQRKGIPQGAPSGQPGSTKHPRNLPTGSYKGNRVELVGAPIRRNTKPDNGGRGARDGNFRQGGPNQGPPISRQGGARRQEGGGGRGQQMRPRTGMPPGMRKPVAPGELMQLQKPTSSATPPIKRGDLNKGPKKDGISTAKPPANRPTPSAAPKRPPARTGAPGSSRKRKPDWDDAAKLEALRNKSPQKQRQKVHIIGENDDALTAETSGFAGGGQAVVLSASLARPGKPKASKKSGSKPTGALRKRKKESTRQRQRRRAMELRAAREAKQIRPEMIVVPEDNITVQELADKLSVESSEIIKSLFFKGITATVTQSLDLSTIETVAEEFGVPVLQDDIEEAAKKTVEMIEETDIKHLTRRPPVVTVMGHVDHGKTSLLDAIRKARVAAGEAGGITQHIGAYQVEVEHEKKLRTLTFLDTPGHEAFTAMRARGTKVTDVAVLVVAADDGVRPQTLEAISHARAAKVPIVVAINKIDKEGASPDRVKQELSEQELVAEEWGGDVVMMPVSAIKGENIDKLLEMILLVTEVEDLQANPARLAKGTVIEAHLDKAKGPVATLLVQNGTLKAGDVVAAGPVLGKVRAMVDENGKRLKEAGPSCPVEALGFNEVPTAGDEFEVYPDEKSARSVVGERASDARATRLAQQMASRRVSLSAMSGQVNDGDLKELNLILKADVQGSVEAILGSLEQLPKDEVQVRVLLSAPGEITETDVDLAAASGAVIIGFNTSMASGAKKAADANSVDVRDYEVIYKLLEDIQLAMEGLLEPDLVEEKIGEAEVRAIFTIGKSAVAGCYITNGKLQRNCKVRVKRADQIVFNGDLDSLRRNKDVVKDVSSGFECGIGCDRFANWKEGDTIEGYKLVTQRRKLNT</sequence>
<feature type="chain" id="PRO_0000137233" description="Translation initiation factor IF-2">
    <location>
        <begin position="1"/>
        <end position="1134"/>
    </location>
</feature>
<feature type="domain" description="tr-type G">
    <location>
        <begin position="626"/>
        <end position="798"/>
    </location>
</feature>
<feature type="region of interest" description="Disordered" evidence="3">
    <location>
        <begin position="55"/>
        <end position="465"/>
    </location>
</feature>
<feature type="region of interest" description="Disordered" evidence="3">
    <location>
        <begin position="491"/>
        <end position="524"/>
    </location>
</feature>
<feature type="region of interest" description="G1" evidence="1">
    <location>
        <begin position="635"/>
        <end position="642"/>
    </location>
</feature>
<feature type="region of interest" description="G2" evidence="1">
    <location>
        <begin position="660"/>
        <end position="664"/>
    </location>
</feature>
<feature type="region of interest" description="G3" evidence="1">
    <location>
        <begin position="685"/>
        <end position="688"/>
    </location>
</feature>
<feature type="region of interest" description="G4" evidence="1">
    <location>
        <begin position="739"/>
        <end position="742"/>
    </location>
</feature>
<feature type="region of interest" description="G5" evidence="1">
    <location>
        <begin position="775"/>
        <end position="777"/>
    </location>
</feature>
<feature type="compositionally biased region" description="Polar residues" evidence="3">
    <location>
        <begin position="56"/>
        <end position="65"/>
    </location>
</feature>
<feature type="compositionally biased region" description="Polar residues" evidence="3">
    <location>
        <begin position="83"/>
        <end position="105"/>
    </location>
</feature>
<feature type="compositionally biased region" description="Polar residues" evidence="3">
    <location>
        <begin position="137"/>
        <end position="147"/>
    </location>
</feature>
<feature type="compositionally biased region" description="Polar residues" evidence="3">
    <location>
        <begin position="208"/>
        <end position="234"/>
    </location>
</feature>
<feature type="compositionally biased region" description="Polar residues" evidence="3">
    <location>
        <begin position="251"/>
        <end position="264"/>
    </location>
</feature>
<feature type="compositionally biased region" description="Basic and acidic residues" evidence="3">
    <location>
        <begin position="391"/>
        <end position="403"/>
    </location>
</feature>
<feature type="compositionally biased region" description="Basic and acidic residues" evidence="3">
    <location>
        <begin position="438"/>
        <end position="450"/>
    </location>
</feature>
<feature type="compositionally biased region" description="Basic residues" evidence="3">
    <location>
        <begin position="495"/>
        <end position="504"/>
    </location>
</feature>
<feature type="compositionally biased region" description="Basic residues" evidence="3">
    <location>
        <begin position="511"/>
        <end position="524"/>
    </location>
</feature>
<feature type="binding site" evidence="2">
    <location>
        <begin position="635"/>
        <end position="642"/>
    </location>
    <ligand>
        <name>GTP</name>
        <dbReference type="ChEBI" id="CHEBI:37565"/>
    </ligand>
</feature>
<feature type="binding site" evidence="2">
    <location>
        <begin position="685"/>
        <end position="689"/>
    </location>
    <ligand>
        <name>GTP</name>
        <dbReference type="ChEBI" id="CHEBI:37565"/>
    </ligand>
</feature>
<feature type="binding site" evidence="2">
    <location>
        <begin position="739"/>
        <end position="742"/>
    </location>
    <ligand>
        <name>GTP</name>
        <dbReference type="ChEBI" id="CHEBI:37565"/>
    </ligand>
</feature>
<protein>
    <recommendedName>
        <fullName evidence="2">Translation initiation factor IF-2</fullName>
    </recommendedName>
</protein>
<evidence type="ECO:0000250" key="1"/>
<evidence type="ECO:0000255" key="2">
    <source>
        <dbReference type="HAMAP-Rule" id="MF_00100"/>
    </source>
</evidence>
<evidence type="ECO:0000256" key="3">
    <source>
        <dbReference type="SAM" id="MobiDB-lite"/>
    </source>
</evidence>
<comment type="function">
    <text evidence="2">One of the essential components for the initiation of protein synthesis. Protects formylmethionyl-tRNA from spontaneous hydrolysis and promotes its binding to the 30S ribosomal subunits. Also involved in the hydrolysis of GTP during the formation of the 70S ribosomal complex.</text>
</comment>
<comment type="subcellular location">
    <subcellularLocation>
        <location evidence="2">Cytoplasm</location>
    </subcellularLocation>
</comment>
<comment type="similarity">
    <text evidence="2">Belongs to the TRAFAC class translation factor GTPase superfamily. Classic translation factor GTPase family. IF-2 subfamily.</text>
</comment>
<dbReference type="EMBL" id="AE017126">
    <property type="protein sequence ID" value="AAQ00693.1"/>
    <property type="molecule type" value="Genomic_DNA"/>
</dbReference>
<dbReference type="RefSeq" id="NP_876040.1">
    <property type="nucleotide sequence ID" value="NC_005042.1"/>
</dbReference>
<dbReference type="RefSeq" id="WP_011125799.1">
    <property type="nucleotide sequence ID" value="NC_005042.1"/>
</dbReference>
<dbReference type="SMR" id="Q7VA20"/>
<dbReference type="STRING" id="167539.Pro_1649"/>
<dbReference type="EnsemblBacteria" id="AAQ00693">
    <property type="protein sequence ID" value="AAQ00693"/>
    <property type="gene ID" value="Pro_1649"/>
</dbReference>
<dbReference type="KEGG" id="pma:Pro_1649"/>
<dbReference type="PATRIC" id="fig|167539.5.peg.1744"/>
<dbReference type="eggNOG" id="COG0532">
    <property type="taxonomic scope" value="Bacteria"/>
</dbReference>
<dbReference type="HOGENOM" id="CLU_006301_5_1_3"/>
<dbReference type="OrthoDB" id="9811804at2"/>
<dbReference type="Proteomes" id="UP000001420">
    <property type="component" value="Chromosome"/>
</dbReference>
<dbReference type="GO" id="GO:0005829">
    <property type="term" value="C:cytosol"/>
    <property type="evidence" value="ECO:0007669"/>
    <property type="project" value="TreeGrafter"/>
</dbReference>
<dbReference type="GO" id="GO:0005525">
    <property type="term" value="F:GTP binding"/>
    <property type="evidence" value="ECO:0007669"/>
    <property type="project" value="UniProtKB-KW"/>
</dbReference>
<dbReference type="GO" id="GO:0003924">
    <property type="term" value="F:GTPase activity"/>
    <property type="evidence" value="ECO:0007669"/>
    <property type="project" value="UniProtKB-UniRule"/>
</dbReference>
<dbReference type="GO" id="GO:0003743">
    <property type="term" value="F:translation initiation factor activity"/>
    <property type="evidence" value="ECO:0007669"/>
    <property type="project" value="UniProtKB-UniRule"/>
</dbReference>
<dbReference type="CDD" id="cd01887">
    <property type="entry name" value="IF2_eIF5B"/>
    <property type="match status" value="1"/>
</dbReference>
<dbReference type="CDD" id="cd03702">
    <property type="entry name" value="IF2_mtIF2_II"/>
    <property type="match status" value="1"/>
</dbReference>
<dbReference type="CDD" id="cd03692">
    <property type="entry name" value="mtIF2_IVc"/>
    <property type="match status" value="1"/>
</dbReference>
<dbReference type="FunFam" id="2.40.30.10:FF:000007">
    <property type="entry name" value="Translation initiation factor IF-2"/>
    <property type="match status" value="1"/>
</dbReference>
<dbReference type="FunFam" id="2.40.30.10:FF:000008">
    <property type="entry name" value="Translation initiation factor IF-2"/>
    <property type="match status" value="1"/>
</dbReference>
<dbReference type="FunFam" id="3.40.50.10050:FF:000001">
    <property type="entry name" value="Translation initiation factor IF-2"/>
    <property type="match status" value="1"/>
</dbReference>
<dbReference type="FunFam" id="3.40.50.300:FF:000019">
    <property type="entry name" value="Translation initiation factor IF-2"/>
    <property type="match status" value="1"/>
</dbReference>
<dbReference type="Gene3D" id="1.10.10.2480">
    <property type="match status" value="1"/>
</dbReference>
<dbReference type="Gene3D" id="3.40.50.300">
    <property type="entry name" value="P-loop containing nucleotide triphosphate hydrolases"/>
    <property type="match status" value="1"/>
</dbReference>
<dbReference type="Gene3D" id="2.40.30.10">
    <property type="entry name" value="Translation factors"/>
    <property type="match status" value="2"/>
</dbReference>
<dbReference type="Gene3D" id="3.40.50.10050">
    <property type="entry name" value="Translation initiation factor IF- 2, domain 3"/>
    <property type="match status" value="1"/>
</dbReference>
<dbReference type="HAMAP" id="MF_00100_B">
    <property type="entry name" value="IF_2_B"/>
    <property type="match status" value="1"/>
</dbReference>
<dbReference type="InterPro" id="IPR053905">
    <property type="entry name" value="EF-G-like_DII"/>
</dbReference>
<dbReference type="InterPro" id="IPR044145">
    <property type="entry name" value="IF2_II"/>
</dbReference>
<dbReference type="InterPro" id="IPR006847">
    <property type="entry name" value="IF2_N"/>
</dbReference>
<dbReference type="InterPro" id="IPR027417">
    <property type="entry name" value="P-loop_NTPase"/>
</dbReference>
<dbReference type="InterPro" id="IPR005225">
    <property type="entry name" value="Small_GTP-bd"/>
</dbReference>
<dbReference type="InterPro" id="IPR000795">
    <property type="entry name" value="T_Tr_GTP-bd_dom"/>
</dbReference>
<dbReference type="InterPro" id="IPR000178">
    <property type="entry name" value="TF_IF2_bacterial-like"/>
</dbReference>
<dbReference type="InterPro" id="IPR015760">
    <property type="entry name" value="TIF_IF2"/>
</dbReference>
<dbReference type="InterPro" id="IPR023115">
    <property type="entry name" value="TIF_IF2_dom3"/>
</dbReference>
<dbReference type="InterPro" id="IPR036925">
    <property type="entry name" value="TIF_IF2_dom3_sf"/>
</dbReference>
<dbReference type="InterPro" id="IPR009000">
    <property type="entry name" value="Transl_B-barrel_sf"/>
</dbReference>
<dbReference type="NCBIfam" id="TIGR00487">
    <property type="entry name" value="IF-2"/>
    <property type="match status" value="1"/>
</dbReference>
<dbReference type="NCBIfam" id="TIGR00231">
    <property type="entry name" value="small_GTP"/>
    <property type="match status" value="1"/>
</dbReference>
<dbReference type="PANTHER" id="PTHR43381:SF5">
    <property type="entry name" value="TR-TYPE G DOMAIN-CONTAINING PROTEIN"/>
    <property type="match status" value="1"/>
</dbReference>
<dbReference type="PANTHER" id="PTHR43381">
    <property type="entry name" value="TRANSLATION INITIATION FACTOR IF-2-RELATED"/>
    <property type="match status" value="1"/>
</dbReference>
<dbReference type="Pfam" id="PF22042">
    <property type="entry name" value="EF-G_D2"/>
    <property type="match status" value="1"/>
</dbReference>
<dbReference type="Pfam" id="PF00009">
    <property type="entry name" value="GTP_EFTU"/>
    <property type="match status" value="1"/>
</dbReference>
<dbReference type="Pfam" id="PF11987">
    <property type="entry name" value="IF-2"/>
    <property type="match status" value="1"/>
</dbReference>
<dbReference type="Pfam" id="PF04760">
    <property type="entry name" value="IF2_N"/>
    <property type="match status" value="2"/>
</dbReference>
<dbReference type="PRINTS" id="PR00315">
    <property type="entry name" value="ELONGATNFCT"/>
</dbReference>
<dbReference type="SUPFAM" id="SSF52156">
    <property type="entry name" value="Initiation factor IF2/eIF5b, domain 3"/>
    <property type="match status" value="1"/>
</dbReference>
<dbReference type="SUPFAM" id="SSF52540">
    <property type="entry name" value="P-loop containing nucleoside triphosphate hydrolases"/>
    <property type="match status" value="1"/>
</dbReference>
<dbReference type="SUPFAM" id="SSF50447">
    <property type="entry name" value="Translation proteins"/>
    <property type="match status" value="2"/>
</dbReference>
<dbReference type="PROSITE" id="PS51722">
    <property type="entry name" value="G_TR_2"/>
    <property type="match status" value="1"/>
</dbReference>
<dbReference type="PROSITE" id="PS01176">
    <property type="entry name" value="IF2"/>
    <property type="match status" value="1"/>
</dbReference>
<gene>
    <name evidence="2" type="primary">infB</name>
    <name type="ordered locus">Pro_1649</name>
</gene>
<keyword id="KW-0963">Cytoplasm</keyword>
<keyword id="KW-0342">GTP-binding</keyword>
<keyword id="KW-0396">Initiation factor</keyword>
<keyword id="KW-0547">Nucleotide-binding</keyword>
<keyword id="KW-0648">Protein biosynthesis</keyword>
<keyword id="KW-1185">Reference proteome</keyword>
<proteinExistence type="inferred from homology"/>